<feature type="signal peptide" evidence="7">
    <location>
        <begin position="1"/>
        <end position="20"/>
    </location>
</feature>
<feature type="chain" id="PRO_0000000391" description="Neuronal acetylcholine receptor subunit beta-4">
    <location>
        <begin position="21"/>
        <end position="495"/>
    </location>
</feature>
<feature type="topological domain" description="Extracellular" evidence="7">
    <location>
        <begin position="21"/>
        <end position="235"/>
    </location>
</feature>
<feature type="transmembrane region" description="Helical" evidence="7">
    <location>
        <begin position="236"/>
        <end position="256"/>
    </location>
</feature>
<feature type="topological domain" description="Cytoplasmic" evidence="7">
    <location>
        <begin position="257"/>
        <end position="264"/>
    </location>
</feature>
<feature type="transmembrane region" description="Helical" evidence="7">
    <location>
        <begin position="265"/>
        <end position="285"/>
    </location>
</feature>
<feature type="topological domain" description="Extracellular" evidence="7">
    <location>
        <begin position="286"/>
        <end position="297"/>
    </location>
</feature>
<feature type="transmembrane region" description="Helical" evidence="7">
    <location>
        <begin position="298"/>
        <end position="318"/>
    </location>
</feature>
<feature type="topological domain" description="Cytoplasmic" evidence="7">
    <location>
        <begin position="319"/>
        <end position="463"/>
    </location>
</feature>
<feature type="transmembrane region" description="Helical" evidence="7">
    <location>
        <begin position="464"/>
        <end position="484"/>
    </location>
</feature>
<feature type="topological domain" description="Extracellular" evidence="7">
    <location>
        <begin position="485"/>
        <end position="495"/>
    </location>
</feature>
<feature type="binding site" evidence="5">
    <location>
        <position position="261"/>
    </location>
    <ligand>
        <name>Na(+)</name>
        <dbReference type="ChEBI" id="CHEBI:29101"/>
    </ligand>
</feature>
<feature type="site" description="Key residue that facilitates effective access of the conotoxin BuIA to the channel binding site" evidence="12">
    <location>
        <position position="81"/>
    </location>
</feature>
<feature type="site" description="Key residue for a low dissociation (K(off)) from the conotoxin BuIA" evidence="12">
    <location>
        <position position="133"/>
    </location>
</feature>
<feature type="site" description="Key residue for a low dissociation (K(off)) from the conotoxin BuIA" evidence="12">
    <location>
        <position position="141"/>
    </location>
</feature>
<feature type="glycosylation site" description="N-linked (GlcNAc...) asparagine" evidence="7">
    <location>
        <position position="35"/>
    </location>
</feature>
<feature type="glycosylation site" description="N-linked (GlcNAc...) asparagine" evidence="7">
    <location>
        <position position="92"/>
    </location>
</feature>
<feature type="glycosylation site" description="N-linked (GlcNAc...) asparagine" evidence="7">
    <location>
        <position position="137"/>
    </location>
</feature>
<feature type="glycosylation site" description="N-linked (GlcNAc...) asparagine" evidence="7">
    <location>
        <position position="165"/>
    </location>
</feature>
<feature type="disulfide bond" evidence="1">
    <location>
        <begin position="152"/>
        <end position="166"/>
    </location>
</feature>
<feature type="splice variant" id="VSP_000076" description="In isoform Long." evidence="10">
    <original>D</original>
    <variation>DARLFDCSGVLPDKGPAGLTVRFP</variation>
    <location>
        <position position="17"/>
    </location>
</feature>
<feature type="sequence conflict" description="In Ref. 3; CAA33839." evidence="11" ref="3">
    <original>V</original>
    <variation>VV</variation>
    <location>
        <position position="9"/>
    </location>
</feature>
<feature type="sequence conflict" description="In Ref. 2; AAA41668." evidence="11" ref="2">
    <location>
        <position position="164"/>
    </location>
</feature>
<feature type="sequence conflict" description="In Ref. 2; AAA41668 and 3; CAA33839." evidence="11" ref="2 3">
    <original>KP</original>
    <variation>NA</variation>
    <location>
        <begin position="230"/>
        <end position="231"/>
    </location>
</feature>
<feature type="sequence conflict" description="In Ref. 3; CAA33839." evidence="11" ref="3">
    <location>
        <begin position="287"/>
        <end position="288"/>
    </location>
</feature>
<feature type="sequence conflict" description="In Ref. 3; CAA33839." evidence="11" ref="3">
    <original>D</original>
    <variation>N</variation>
    <location>
        <position position="290"/>
    </location>
</feature>
<sequence>MRGTPLLLVSLFSLLQDGDCRLANAEEKLMDDLLNKTRYNNLIRPATSSSQLISIRLELSLSQLISVNEREQIMTTSIWLKQEWTDYRLAWNSSCYEGVNILRIPAKRVWLPDIVLYNNADGTYEVSVYTNVIVRSNGSIQWLPPAIYKSACKIEVKHFPFDQQNCTLKFRSWTYDHTEIDMVLKSPTAIMDDFTPSGEWDIVALPGRRTVNPQDPSYVDVTYDFIIKRKPLFYTINLIIPCVLITSLAILVFYLPSDCGEKMTLCISVLLALTFFLLLISKIVPPTSLDIPLIGKYLLFTMVLVTFSIVTTVCVLNVHHRSPSTHTMASWVKECFLHKLPTFLFMKRPGLEVSLVRVPHPSQLHLATADTAATSALGPTSPSNLYGSSMYFVNPVPAAPKSAVSSHTAGLPRDARLRSSGRFREDLQEALEGVSFIAQHLESDDRDQSVIEDWKFVAMVVDRLFLWVFVFVCILGTMGLFLPPLFQIHAPSKDS</sequence>
<name>ACHB4_RAT</name>
<reference key="1">
    <citation type="journal article" date="1989" name="Neuron">
        <title>The functional diversity of the neuronal nicotinic acetylcholine receptors is increased by a novel subunit: beta 4.</title>
        <authorList>
            <person name="Duvoisin R.M."/>
            <person name="Deneris E.S."/>
            <person name="Patrick J."/>
            <person name="Heinemann S.F."/>
        </authorList>
    </citation>
    <scope>NUCLEOTIDE SEQUENCE [MRNA] (ISOFORM SHORT)</scope>
</reference>
<reference key="2">
    <citation type="journal article" date="1990" name="J. Biol. Chem.">
        <title>Alpha 3, alpha 5, and beta 4: three members of the rat neuronal nicotinic acetylcholine receptor-related gene family form a gene cluster.</title>
        <authorList>
            <person name="Boulter J."/>
            <person name="O'Shea-Greenfield A."/>
            <person name="Duvoisin R.M."/>
            <person name="Connolly J.G."/>
            <person name="Wada E."/>
            <person name="Jensen A."/>
            <person name="Gardner P.D."/>
            <person name="Ballivet M."/>
            <person name="Deneris E.S."/>
            <person name="McKinnon D."/>
            <person name="Heinemann S.F."/>
            <person name="Patrick J."/>
        </authorList>
    </citation>
    <scope>NUCLEOTIDE SEQUENCE [GENOMIC DNA] (ISOFORM SHORT)</scope>
</reference>
<reference key="3">
    <citation type="journal article" date="1989" name="J. Neurochem.">
        <title>Cloning of a putative neuronal nicotinic acetylcholine receptor subunit.</title>
        <authorList>
            <person name="Isenberg K.E."/>
            <person name="Meyer G.E."/>
        </authorList>
    </citation>
    <scope>NUCLEOTIDE SEQUENCE [MRNA] (ISOFORM LONG)</scope>
    <source>
        <tissue>Superior cervical ganglion</tissue>
    </source>
</reference>
<reference key="4">
    <citation type="submission" date="2004-03" db="EMBL/GenBank/DDBJ databases">
        <authorList>
            <person name="Groot-Kormelink P.J."/>
        </authorList>
    </citation>
    <scope>NUCLEOTIDE SEQUENCE [MRNA] (ISOFORM SHORT)</scope>
    <source>
        <strain>Sprague-Dawley</strain>
        <tissue>Brain</tissue>
    </source>
</reference>
<reference key="5">
    <citation type="journal article" date="1999" name="Neuropharmacology">
        <title>Alpha3beta4 subunit-containing nicotinic receptors dominate function in rat medial habenula neurons.</title>
        <authorList>
            <person name="Quick M.W."/>
            <person name="Ceballos R.M."/>
            <person name="Kasten M."/>
            <person name="McIntosh J.M."/>
            <person name="Lester R.A."/>
        </authorList>
    </citation>
    <scope>ACTIVITY REGULATION</scope>
    <scope>FUNCTION</scope>
    <scope>SUBUNIT</scope>
</reference>
<reference key="6">
    <citation type="journal article" date="2006" name="Biochemistry">
        <title>Determinants of alpha-conotoxin BuIA selectivity on the nicotinic acetylcholine receptor beta subunit.</title>
        <authorList>
            <person name="Shiembob D.L."/>
            <person name="Roberts R.L."/>
            <person name="Luetje C.W."/>
            <person name="McIntosh J.M."/>
        </authorList>
    </citation>
    <scope>ACTIVITY REGULATION</scope>
    <scope>SITES LYS-81; ILE-133 AND GLN-141</scope>
</reference>
<keyword id="KW-0025">Alternative splicing</keyword>
<keyword id="KW-1003">Cell membrane</keyword>
<keyword id="KW-1015">Disulfide bond</keyword>
<keyword id="KW-0325">Glycoprotein</keyword>
<keyword id="KW-0407">Ion channel</keyword>
<keyword id="KW-0406">Ion transport</keyword>
<keyword id="KW-1071">Ligand-gated ion channel</keyword>
<keyword id="KW-0472">Membrane</keyword>
<keyword id="KW-0479">Metal-binding</keyword>
<keyword id="KW-0675">Receptor</keyword>
<keyword id="KW-1185">Reference proteome</keyword>
<keyword id="KW-0732">Signal</keyword>
<keyword id="KW-0915">Sodium</keyword>
<keyword id="KW-0770">Synapse</keyword>
<keyword id="KW-0812">Transmembrane</keyword>
<keyword id="KW-1133">Transmembrane helix</keyword>
<keyword id="KW-0813">Transport</keyword>
<dbReference type="EMBL" id="U42976">
    <property type="protein sequence ID" value="AAA85212.1"/>
    <property type="molecule type" value="mRNA"/>
</dbReference>
<dbReference type="EMBL" id="M33953">
    <property type="protein sequence ID" value="AAA41668.1"/>
    <property type="molecule type" value="Genomic_DNA"/>
</dbReference>
<dbReference type="EMBL" id="J05232">
    <property type="protein sequence ID" value="AAA41668.1"/>
    <property type="status" value="JOINED"/>
    <property type="molecule type" value="Genomic_DNA"/>
</dbReference>
<dbReference type="EMBL" id="M89971">
    <property type="protein sequence ID" value="AAA41668.1"/>
    <property type="status" value="JOINED"/>
    <property type="molecule type" value="Genomic_DNA"/>
</dbReference>
<dbReference type="EMBL" id="M33951">
    <property type="protein sequence ID" value="AAA41668.1"/>
    <property type="status" value="JOINED"/>
    <property type="molecule type" value="Genomic_DNA"/>
</dbReference>
<dbReference type="EMBL" id="M89989">
    <property type="protein sequence ID" value="AAA41668.1"/>
    <property type="status" value="JOINED"/>
    <property type="molecule type" value="Genomic_DNA"/>
</dbReference>
<dbReference type="EMBL" id="M33952">
    <property type="protein sequence ID" value="AAA41668.1"/>
    <property type="status" value="JOINED"/>
    <property type="molecule type" value="Genomic_DNA"/>
</dbReference>
<dbReference type="EMBL" id="X15834">
    <property type="protein sequence ID" value="CAA33839.1"/>
    <property type="molecule type" value="mRNA"/>
</dbReference>
<dbReference type="EMBL" id="AY574260">
    <property type="protein sequence ID" value="AAS90356.1"/>
    <property type="molecule type" value="mRNA"/>
</dbReference>
<dbReference type="PIR" id="A30992">
    <property type="entry name" value="A30992"/>
</dbReference>
<dbReference type="PIR" id="B35721">
    <property type="entry name" value="B35721"/>
</dbReference>
<dbReference type="RefSeq" id="NP_434693.1">
    <molecule id="P12392-1"/>
    <property type="nucleotide sequence ID" value="NM_052806.3"/>
</dbReference>
<dbReference type="SMR" id="P12392"/>
<dbReference type="ComplexPortal" id="CPX-183">
    <property type="entry name" value="Neuronal nicotinic acetylcholine receptor complex, alpha2-beta4"/>
</dbReference>
<dbReference type="ComplexPortal" id="CPX-205">
    <property type="entry name" value="Neuronal nicotinic acetylcholine receptor complex, alpha3-beta4"/>
</dbReference>
<dbReference type="ComplexPortal" id="CPX-208">
    <property type="entry name" value="Neuronal nicotinic acetylcholine receptor complex, alpha3-alpha5-beta4"/>
</dbReference>
<dbReference type="ComplexPortal" id="CPX-211">
    <property type="entry name" value="Neuronal nicotinic acetylcholine receptor complex, alpha3-alpha6-beta4"/>
</dbReference>
<dbReference type="ComplexPortal" id="CPX-219">
    <property type="entry name" value="Neuronal nicotinic acetylcholine receptor complex, alpha4-beta4"/>
</dbReference>
<dbReference type="FunCoup" id="P12392">
    <property type="interactions" value="168"/>
</dbReference>
<dbReference type="IntAct" id="P12392">
    <property type="interactions" value="6"/>
</dbReference>
<dbReference type="STRING" id="10116.ENSRNOP00000019458"/>
<dbReference type="BindingDB" id="P12392"/>
<dbReference type="ChEMBL" id="CHEMBL2658"/>
<dbReference type="DrugCentral" id="P12392"/>
<dbReference type="GlyCosmos" id="P12392">
    <property type="glycosylation" value="4 sites, No reported glycans"/>
</dbReference>
<dbReference type="GlyGen" id="P12392">
    <property type="glycosylation" value="5 sites"/>
</dbReference>
<dbReference type="PhosphoSitePlus" id="P12392"/>
<dbReference type="PaxDb" id="10116-ENSRNOP00000051052"/>
<dbReference type="Ensembl" id="ENSRNOT00000019458.6">
    <molecule id="P12392-1"/>
    <property type="protein sequence ID" value="ENSRNOP00000019458.2"/>
    <property type="gene ID" value="ENSRNOG00000014427.8"/>
</dbReference>
<dbReference type="GeneID" id="25103"/>
<dbReference type="KEGG" id="rno:25103"/>
<dbReference type="UCSC" id="RGD:2351">
    <molecule id="P12392-1"/>
    <property type="organism name" value="rat"/>
</dbReference>
<dbReference type="AGR" id="RGD:2351"/>
<dbReference type="CTD" id="1143"/>
<dbReference type="RGD" id="2351">
    <property type="gene designation" value="Chrnb4"/>
</dbReference>
<dbReference type="eggNOG" id="KOG3645">
    <property type="taxonomic scope" value="Eukaryota"/>
</dbReference>
<dbReference type="GeneTree" id="ENSGT00940000158708"/>
<dbReference type="HOGENOM" id="CLU_018074_1_1_1"/>
<dbReference type="InParanoid" id="P12392"/>
<dbReference type="OMA" id="TCKIEVK"/>
<dbReference type="OrthoDB" id="5975154at2759"/>
<dbReference type="Reactome" id="R-RNO-629587">
    <property type="pathway name" value="Highly sodium permeable postsynaptic acetylcholine nicotinic receptors"/>
</dbReference>
<dbReference type="Reactome" id="R-RNO-629594">
    <property type="pathway name" value="Highly calcium permeable postsynaptic nicotinic acetylcholine receptors"/>
</dbReference>
<dbReference type="Reactome" id="R-RNO-629597">
    <property type="pathway name" value="Highly calcium permeable nicotinic acetylcholine receptors"/>
</dbReference>
<dbReference type="Reactome" id="R-RNO-6798695">
    <property type="pathway name" value="Neutrophil degranulation"/>
</dbReference>
<dbReference type="PRO" id="PR:P12392"/>
<dbReference type="Proteomes" id="UP000002494">
    <property type="component" value="Chromosome 8"/>
</dbReference>
<dbReference type="Bgee" id="ENSRNOG00000014427">
    <property type="expression patterns" value="Expressed in ovary and 8 other cell types or tissues"/>
</dbReference>
<dbReference type="GO" id="GO:0005892">
    <property type="term" value="C:acetylcholine-gated channel complex"/>
    <property type="evidence" value="ECO:0000314"/>
    <property type="project" value="RGD"/>
</dbReference>
<dbReference type="GO" id="GO:0098981">
    <property type="term" value="C:cholinergic synapse"/>
    <property type="evidence" value="ECO:0000266"/>
    <property type="project" value="RGD"/>
</dbReference>
<dbReference type="GO" id="GO:0043005">
    <property type="term" value="C:neuron projection"/>
    <property type="evidence" value="ECO:0000318"/>
    <property type="project" value="GO_Central"/>
</dbReference>
<dbReference type="GO" id="GO:0005886">
    <property type="term" value="C:plasma membrane"/>
    <property type="evidence" value="ECO:0000314"/>
    <property type="project" value="MGI"/>
</dbReference>
<dbReference type="GO" id="GO:0099634">
    <property type="term" value="C:postsynaptic specialization membrane"/>
    <property type="evidence" value="ECO:0000266"/>
    <property type="project" value="RGD"/>
</dbReference>
<dbReference type="GO" id="GO:0032991">
    <property type="term" value="C:protein-containing complex"/>
    <property type="evidence" value="ECO:0000314"/>
    <property type="project" value="RGD"/>
</dbReference>
<dbReference type="GO" id="GO:0045202">
    <property type="term" value="C:synapse"/>
    <property type="evidence" value="ECO:0000318"/>
    <property type="project" value="GO_Central"/>
</dbReference>
<dbReference type="GO" id="GO:0042166">
    <property type="term" value="F:acetylcholine binding"/>
    <property type="evidence" value="ECO:0000314"/>
    <property type="project" value="RGD"/>
</dbReference>
<dbReference type="GO" id="GO:0015464">
    <property type="term" value="F:acetylcholine receptor activity"/>
    <property type="evidence" value="ECO:0000266"/>
    <property type="project" value="RGD"/>
</dbReference>
<dbReference type="GO" id="GO:0022848">
    <property type="term" value="F:acetylcholine-gated monoatomic cation-selective channel activity"/>
    <property type="evidence" value="ECO:0000266"/>
    <property type="project" value="RGD"/>
</dbReference>
<dbReference type="GO" id="GO:1901363">
    <property type="term" value="F:heterocyclic compound binding"/>
    <property type="evidence" value="ECO:0000314"/>
    <property type="project" value="RGD"/>
</dbReference>
<dbReference type="GO" id="GO:0044877">
    <property type="term" value="F:protein-containing complex binding"/>
    <property type="evidence" value="ECO:0000314"/>
    <property type="project" value="RGD"/>
</dbReference>
<dbReference type="GO" id="GO:1904315">
    <property type="term" value="F:transmitter-gated monoatomic ion channel activity involved in regulation of postsynaptic membrane potential"/>
    <property type="evidence" value="ECO:0000266"/>
    <property type="project" value="RGD"/>
</dbReference>
<dbReference type="GO" id="GO:0095500">
    <property type="term" value="P:acetylcholine receptor signaling pathway"/>
    <property type="evidence" value="ECO:0000318"/>
    <property type="project" value="GO_Central"/>
</dbReference>
<dbReference type="GO" id="GO:0035095">
    <property type="term" value="P:behavioral response to nicotine"/>
    <property type="evidence" value="ECO:0000266"/>
    <property type="project" value="RGD"/>
</dbReference>
<dbReference type="GO" id="GO:0007268">
    <property type="term" value="P:chemical synaptic transmission"/>
    <property type="evidence" value="ECO:0000318"/>
    <property type="project" value="GO_Central"/>
</dbReference>
<dbReference type="GO" id="GO:0007626">
    <property type="term" value="P:locomotory behavior"/>
    <property type="evidence" value="ECO:0000266"/>
    <property type="project" value="RGD"/>
</dbReference>
<dbReference type="GO" id="GO:0051899">
    <property type="term" value="P:membrane depolarization"/>
    <property type="evidence" value="ECO:0000318"/>
    <property type="project" value="GO_Central"/>
</dbReference>
<dbReference type="GO" id="GO:0034220">
    <property type="term" value="P:monoatomic ion transmembrane transport"/>
    <property type="evidence" value="ECO:0000318"/>
    <property type="project" value="GO_Central"/>
</dbReference>
<dbReference type="GO" id="GO:0019228">
    <property type="term" value="P:neuronal action potential"/>
    <property type="evidence" value="ECO:0000266"/>
    <property type="project" value="RGD"/>
</dbReference>
<dbReference type="GO" id="GO:0051971">
    <property type="term" value="P:positive regulation of transmission of nerve impulse"/>
    <property type="evidence" value="ECO:0000266"/>
    <property type="project" value="RGD"/>
</dbReference>
<dbReference type="GO" id="GO:0042391">
    <property type="term" value="P:regulation of membrane potential"/>
    <property type="evidence" value="ECO:0000266"/>
    <property type="project" value="RGD"/>
</dbReference>
<dbReference type="GO" id="GO:0006940">
    <property type="term" value="P:regulation of smooth muscle contraction"/>
    <property type="evidence" value="ECO:0000266"/>
    <property type="project" value="RGD"/>
</dbReference>
<dbReference type="GO" id="GO:0035094">
    <property type="term" value="P:response to nicotine"/>
    <property type="evidence" value="ECO:0000266"/>
    <property type="project" value="RGD"/>
</dbReference>
<dbReference type="GO" id="GO:0007165">
    <property type="term" value="P:signal transduction"/>
    <property type="evidence" value="ECO:0000266"/>
    <property type="project" value="RGD"/>
</dbReference>
<dbReference type="GO" id="GO:0006939">
    <property type="term" value="P:smooth muscle contraction"/>
    <property type="evidence" value="ECO:0000266"/>
    <property type="project" value="RGD"/>
</dbReference>
<dbReference type="GO" id="GO:0060084">
    <property type="term" value="P:synaptic transmission involved in micturition"/>
    <property type="evidence" value="ECO:0000266"/>
    <property type="project" value="RGD"/>
</dbReference>
<dbReference type="CDD" id="cd19064">
    <property type="entry name" value="LGIC_TM_nAChR"/>
    <property type="match status" value="1"/>
</dbReference>
<dbReference type="FunFam" id="2.70.170.10:FF:000006">
    <property type="entry name" value="Cholinergic receptor nicotinic beta 2 subunit"/>
    <property type="match status" value="1"/>
</dbReference>
<dbReference type="FunFam" id="1.20.58.390:FF:000008">
    <property type="entry name" value="Cholinergic receptor nicotinic beta 4 subunit"/>
    <property type="match status" value="1"/>
</dbReference>
<dbReference type="FunFam" id="1.20.58.390:FF:000034">
    <property type="entry name" value="Cholinergic receptor nicotinic beta 4 subunit"/>
    <property type="match status" value="1"/>
</dbReference>
<dbReference type="Gene3D" id="2.70.170.10">
    <property type="entry name" value="Neurotransmitter-gated ion-channel ligand-binding domain"/>
    <property type="match status" value="1"/>
</dbReference>
<dbReference type="Gene3D" id="1.20.58.390">
    <property type="entry name" value="Neurotransmitter-gated ion-channel transmembrane domain"/>
    <property type="match status" value="2"/>
</dbReference>
<dbReference type="InterPro" id="IPR006202">
    <property type="entry name" value="Neur_chan_lig-bd"/>
</dbReference>
<dbReference type="InterPro" id="IPR036734">
    <property type="entry name" value="Neur_chan_lig-bd_sf"/>
</dbReference>
<dbReference type="InterPro" id="IPR006201">
    <property type="entry name" value="Neur_channel"/>
</dbReference>
<dbReference type="InterPro" id="IPR036719">
    <property type="entry name" value="Neuro-gated_channel_TM_sf"/>
</dbReference>
<dbReference type="InterPro" id="IPR038050">
    <property type="entry name" value="Neuro_actylchol_rec"/>
</dbReference>
<dbReference type="InterPro" id="IPR006029">
    <property type="entry name" value="Neurotrans-gated_channel_TM"/>
</dbReference>
<dbReference type="InterPro" id="IPR018000">
    <property type="entry name" value="Neurotransmitter_ion_chnl_CS"/>
</dbReference>
<dbReference type="InterPro" id="IPR002394">
    <property type="entry name" value="Nicotinic_acetylcholine_rcpt"/>
</dbReference>
<dbReference type="NCBIfam" id="TIGR00860">
    <property type="entry name" value="LIC"/>
    <property type="match status" value="1"/>
</dbReference>
<dbReference type="PANTHER" id="PTHR18945">
    <property type="entry name" value="NEUROTRANSMITTER GATED ION CHANNEL"/>
    <property type="match status" value="1"/>
</dbReference>
<dbReference type="Pfam" id="PF02931">
    <property type="entry name" value="Neur_chan_LBD"/>
    <property type="match status" value="1"/>
</dbReference>
<dbReference type="Pfam" id="PF02932">
    <property type="entry name" value="Neur_chan_memb"/>
    <property type="match status" value="1"/>
</dbReference>
<dbReference type="PRINTS" id="PR00254">
    <property type="entry name" value="NICOTINICR"/>
</dbReference>
<dbReference type="PRINTS" id="PR00252">
    <property type="entry name" value="NRIONCHANNEL"/>
</dbReference>
<dbReference type="SUPFAM" id="SSF90112">
    <property type="entry name" value="Neurotransmitter-gated ion-channel transmembrane pore"/>
    <property type="match status" value="1"/>
</dbReference>
<dbReference type="SUPFAM" id="SSF63712">
    <property type="entry name" value="Nicotinic receptor ligand binding domain-like"/>
    <property type="match status" value="1"/>
</dbReference>
<dbReference type="PROSITE" id="PS00236">
    <property type="entry name" value="NEUROTR_ION_CHANNEL"/>
    <property type="match status" value="1"/>
</dbReference>
<gene>
    <name type="primary">Chrnb4</name>
    <name type="synonym">Acrb4</name>
</gene>
<comment type="function">
    <text evidence="5 6 8">Component of neuronal acetylcholine receptors (nAChRs) that function as pentameric, ligand-gated cation channels with high calcium permeability among other activities. nAChRs are excitatory neurotrasnmitter receptors formed by a collection of nAChR subunits known to mediate synaptic transmission in the nervous system and the neuromuscular junction. Each nAchR subunit confers differential attributes to channel properties, including activation, deactivation and desensitization kinetics, pH sensitivity, cation permeability, and binding to allosteric modulators. CHRNB4 forms heteropentameric neuronal acetylcholine receptors with CHRNA2, CHRNA3 and CHRNA4, as well as CHRNA5 and CHRNB3 as accesory subunits. CHRNA3:CHRNB4 being predominant in neurons of the autonomic ganglia, it is known as ganglionic nicotinic receptor (By similarity). CHRNA3:CHRNB4 or CHRNA3:CHRNA5:CHRNB4 play also an important role in the habenulo-interpeduncular tract, modulating the mesolimbic dopamine system and affecting reward circuits and addiction (PubMed:10465681). Hypothalamic CHRNA3:CHRNB4 nAChR activation by nicotine leads to activation of POMC neurons and a decrease in food intake (By similarity).</text>
</comment>
<comment type="catalytic activity">
    <reaction evidence="5">
        <text>Ca(2+)(in) = Ca(2+)(out)</text>
        <dbReference type="Rhea" id="RHEA:29671"/>
        <dbReference type="ChEBI" id="CHEBI:29108"/>
    </reaction>
</comment>
<comment type="catalytic activity">
    <reaction evidence="3">
        <text>K(+)(in) = K(+)(out)</text>
        <dbReference type="Rhea" id="RHEA:29463"/>
        <dbReference type="ChEBI" id="CHEBI:29103"/>
    </reaction>
</comment>
<comment type="catalytic activity">
    <reaction evidence="4">
        <text>Na(+)(in) = Na(+)(out)</text>
        <dbReference type="Rhea" id="RHEA:34963"/>
        <dbReference type="ChEBI" id="CHEBI:29101"/>
    </reaction>
</comment>
<comment type="activity regulation">
    <text evidence="8 9">Activated by a myriad of ligands such as acetylcholine, cytisine, nicotine, choline and epibatidine (PubMed:10465681). nAChR activity is inhibited by the antagonist alpha-conotoxins BuIA and MII, small disulfide-constrained peptides from cone snails (PubMed:16964981). The heteropentamer CHRNA3:CHRNB4 activity is blocked by the alpha-conotoxin ImI and AuIB (PubMed:10465681).</text>
</comment>
<comment type="subunit">
    <text evidence="5 8">Neuronal AChR is composed of two different types of subunits: alpha and beta. CHRNB4/Beta-4 subunit can be combined to CHRNA2/alpha-2, CHRNA3/alpha-3 or CHRNA4/alpha-4, CHRNA5/alpha-5 and CHRNB3/beta-3 to give rise to functional receptors (PubMed:10465681). Forms stoichiometries such as (CHRNA3)2:(CHRNB4)3 or (CHRNA3:CHRNB4)2:CHRNB3. Interacts with RIC3; which is required for proper folding and assembly. Interacts with LYPD6 (By similarity).</text>
</comment>
<comment type="interaction">
    <interactant intactId="EBI-9008856">
        <id>P12392</id>
    </interactant>
    <interactant intactId="EBI-7842410">
        <id>P09483</id>
        <label>Chrna4</label>
    </interactant>
    <organismsDiffer>false</organismsDiffer>
    <experiments>4</experiments>
</comment>
<comment type="subcellular location">
    <subcellularLocation>
        <location evidence="2">Synaptic cell membrane</location>
        <topology evidence="7">Multi-pass membrane protein</topology>
    </subcellularLocation>
    <subcellularLocation>
        <location evidence="2">Cell membrane</location>
        <topology evidence="7">Multi-pass membrane protein</topology>
    </subcellularLocation>
</comment>
<comment type="alternative products">
    <event type="alternative splicing"/>
    <isoform>
        <id>P12392-1</id>
        <name>Short</name>
        <sequence type="displayed"/>
    </isoform>
    <isoform>
        <id>P12392-2</id>
        <name>Long</name>
        <sequence type="described" ref="VSP_000076"/>
    </isoform>
</comment>
<comment type="tissue specificity">
    <text>In the brain, it is detected in the medial habenula. In the peripheral nervous system, it is found at least in the adrenal gland.</text>
</comment>
<comment type="similarity">
    <text evidence="11">Belongs to the ligand-gated ion channel (TC 1.A.9) family. Acetylcholine receptor (TC 1.A.9.1) subfamily. Beta-4/CHRNB4 sub-subfamily.</text>
</comment>
<accession>P12392</accession>
<accession>Q63361</accession>
<proteinExistence type="evidence at protein level"/>
<protein>
    <recommendedName>
        <fullName>Neuronal acetylcholine receptor subunit beta-4</fullName>
    </recommendedName>
    <alternativeName>
        <fullName>Neuronal acetylcholine receptor non-alpha-2 chain</fullName>
        <shortName>N-alpha 2</shortName>
    </alternativeName>
</protein>
<evidence type="ECO:0000250" key="1"/>
<evidence type="ECO:0000250" key="2">
    <source>
        <dbReference type="UniProtKB" id="P04757"/>
    </source>
</evidence>
<evidence type="ECO:0000250" key="3">
    <source>
        <dbReference type="UniProtKB" id="P04758"/>
    </source>
</evidence>
<evidence type="ECO:0000250" key="4">
    <source>
        <dbReference type="UniProtKB" id="P17787"/>
    </source>
</evidence>
<evidence type="ECO:0000250" key="5">
    <source>
        <dbReference type="UniProtKB" id="P30926"/>
    </source>
</evidence>
<evidence type="ECO:0000250" key="6">
    <source>
        <dbReference type="UniProtKB" id="Q8R493"/>
    </source>
</evidence>
<evidence type="ECO:0000255" key="7"/>
<evidence type="ECO:0000269" key="8">
    <source>
    </source>
</evidence>
<evidence type="ECO:0000269" key="9">
    <source>
    </source>
</evidence>
<evidence type="ECO:0000303" key="10">
    <source>
    </source>
</evidence>
<evidence type="ECO:0000305" key="11"/>
<evidence type="ECO:0000305" key="12">
    <source>
    </source>
</evidence>
<organism>
    <name type="scientific">Rattus norvegicus</name>
    <name type="common">Rat</name>
    <dbReference type="NCBI Taxonomy" id="10116"/>
    <lineage>
        <taxon>Eukaryota</taxon>
        <taxon>Metazoa</taxon>
        <taxon>Chordata</taxon>
        <taxon>Craniata</taxon>
        <taxon>Vertebrata</taxon>
        <taxon>Euteleostomi</taxon>
        <taxon>Mammalia</taxon>
        <taxon>Eutheria</taxon>
        <taxon>Euarchontoglires</taxon>
        <taxon>Glires</taxon>
        <taxon>Rodentia</taxon>
        <taxon>Myomorpha</taxon>
        <taxon>Muroidea</taxon>
        <taxon>Muridae</taxon>
        <taxon>Murinae</taxon>
        <taxon>Rattus</taxon>
    </lineage>
</organism>